<comment type="subunit">
    <text evidence="1">Part of the 50S ribosomal subunit. Cross-links to the P and E site tRNAs (By similarity).</text>
</comment>
<comment type="miscellaneous">
    <text evidence="1">Surface exposed on the 50S subunit.</text>
</comment>
<comment type="similarity">
    <text evidence="2">Belongs to the bacterial ribosomal protein bL33 family.</text>
</comment>
<accession>P0A7P0</accession>
<accession>P02436</accession>
<keyword id="KW-0488">Methylation</keyword>
<keyword id="KW-1185">Reference proteome</keyword>
<keyword id="KW-0687">Ribonucleoprotein</keyword>
<keyword id="KW-0689">Ribosomal protein</keyword>
<keyword id="KW-0694">RNA-binding</keyword>
<keyword id="KW-0820">tRNA-binding</keyword>
<dbReference type="EMBL" id="AE014075">
    <property type="protein sequence ID" value="AAN82896.1"/>
    <property type="molecule type" value="Genomic_DNA"/>
</dbReference>
<dbReference type="RefSeq" id="WP_001051798.1">
    <property type="nucleotide sequence ID" value="NZ_CP051263.1"/>
</dbReference>
<dbReference type="SMR" id="P0A7P0"/>
<dbReference type="STRING" id="199310.c4460"/>
<dbReference type="GeneID" id="97607673"/>
<dbReference type="KEGG" id="ecc:c4460"/>
<dbReference type="eggNOG" id="COG0267">
    <property type="taxonomic scope" value="Bacteria"/>
</dbReference>
<dbReference type="HOGENOM" id="CLU_190949_1_1_6"/>
<dbReference type="BioCyc" id="ECOL199310:C4460-MONOMER"/>
<dbReference type="Proteomes" id="UP000001410">
    <property type="component" value="Chromosome"/>
</dbReference>
<dbReference type="GO" id="GO:0022625">
    <property type="term" value="C:cytosolic large ribosomal subunit"/>
    <property type="evidence" value="ECO:0007669"/>
    <property type="project" value="TreeGrafter"/>
</dbReference>
<dbReference type="GO" id="GO:0003735">
    <property type="term" value="F:structural constituent of ribosome"/>
    <property type="evidence" value="ECO:0007669"/>
    <property type="project" value="InterPro"/>
</dbReference>
<dbReference type="GO" id="GO:0000049">
    <property type="term" value="F:tRNA binding"/>
    <property type="evidence" value="ECO:0007669"/>
    <property type="project" value="UniProtKB-KW"/>
</dbReference>
<dbReference type="GO" id="GO:0006412">
    <property type="term" value="P:translation"/>
    <property type="evidence" value="ECO:0007669"/>
    <property type="project" value="UniProtKB-UniRule"/>
</dbReference>
<dbReference type="FunFam" id="2.20.28.120:FF:000001">
    <property type="entry name" value="50S ribosomal protein L33"/>
    <property type="match status" value="1"/>
</dbReference>
<dbReference type="Gene3D" id="2.20.28.120">
    <property type="entry name" value="Ribosomal protein L33"/>
    <property type="match status" value="1"/>
</dbReference>
<dbReference type="HAMAP" id="MF_00294">
    <property type="entry name" value="Ribosomal_bL33"/>
    <property type="match status" value="1"/>
</dbReference>
<dbReference type="InterPro" id="IPR001705">
    <property type="entry name" value="Ribosomal_bL33"/>
</dbReference>
<dbReference type="InterPro" id="IPR018264">
    <property type="entry name" value="Ribosomal_bL33_CS"/>
</dbReference>
<dbReference type="InterPro" id="IPR038584">
    <property type="entry name" value="Ribosomal_bL33_sf"/>
</dbReference>
<dbReference type="InterPro" id="IPR011332">
    <property type="entry name" value="Ribosomal_zn-bd"/>
</dbReference>
<dbReference type="NCBIfam" id="NF001860">
    <property type="entry name" value="PRK00595.1"/>
    <property type="match status" value="1"/>
</dbReference>
<dbReference type="NCBIfam" id="TIGR01023">
    <property type="entry name" value="rpmG_bact"/>
    <property type="match status" value="1"/>
</dbReference>
<dbReference type="PANTHER" id="PTHR15238">
    <property type="entry name" value="54S RIBOSOMAL PROTEIN L39, MITOCHONDRIAL"/>
    <property type="match status" value="1"/>
</dbReference>
<dbReference type="PANTHER" id="PTHR15238:SF1">
    <property type="entry name" value="LARGE RIBOSOMAL SUBUNIT PROTEIN BL33M"/>
    <property type="match status" value="1"/>
</dbReference>
<dbReference type="Pfam" id="PF00471">
    <property type="entry name" value="Ribosomal_L33"/>
    <property type="match status" value="1"/>
</dbReference>
<dbReference type="SUPFAM" id="SSF57829">
    <property type="entry name" value="Zn-binding ribosomal proteins"/>
    <property type="match status" value="1"/>
</dbReference>
<dbReference type="PROSITE" id="PS00582">
    <property type="entry name" value="RIBOSOMAL_L33"/>
    <property type="match status" value="1"/>
</dbReference>
<feature type="initiator methionine" description="Removed" evidence="1">
    <location>
        <position position="1"/>
    </location>
</feature>
<feature type="chain" id="PRO_0000170159" description="Large ribosomal subunit protein bL33">
    <location>
        <begin position="2"/>
        <end position="55"/>
    </location>
</feature>
<feature type="modified residue" description="N-methylalanine" evidence="1">
    <location>
        <position position="2"/>
    </location>
</feature>
<organism>
    <name type="scientific">Escherichia coli O6:H1 (strain CFT073 / ATCC 700928 / UPEC)</name>
    <dbReference type="NCBI Taxonomy" id="199310"/>
    <lineage>
        <taxon>Bacteria</taxon>
        <taxon>Pseudomonadati</taxon>
        <taxon>Pseudomonadota</taxon>
        <taxon>Gammaproteobacteria</taxon>
        <taxon>Enterobacterales</taxon>
        <taxon>Enterobacteriaceae</taxon>
        <taxon>Escherichia</taxon>
    </lineage>
</organism>
<protein>
    <recommendedName>
        <fullName evidence="2">Large ribosomal subunit protein bL33</fullName>
    </recommendedName>
    <alternativeName>
        <fullName>50S ribosomal protein L33</fullName>
    </alternativeName>
</protein>
<evidence type="ECO:0000250" key="1"/>
<evidence type="ECO:0000305" key="2"/>
<sequence>MAKGIREKIKLVSSAGTGHFYTTTKNKRTKPEKLELKKFDPVVRQHVIYKEAKIK</sequence>
<name>RL33_ECOL6</name>
<proteinExistence type="inferred from homology"/>
<reference key="1">
    <citation type="journal article" date="2002" name="Proc. Natl. Acad. Sci. U.S.A.">
        <title>Extensive mosaic structure revealed by the complete genome sequence of uropathogenic Escherichia coli.</title>
        <authorList>
            <person name="Welch R.A."/>
            <person name="Burland V."/>
            <person name="Plunkett G. III"/>
            <person name="Redford P."/>
            <person name="Roesch P."/>
            <person name="Rasko D."/>
            <person name="Buckles E.L."/>
            <person name="Liou S.-R."/>
            <person name="Boutin A."/>
            <person name="Hackett J."/>
            <person name="Stroud D."/>
            <person name="Mayhew G.F."/>
            <person name="Rose D.J."/>
            <person name="Zhou S."/>
            <person name="Schwartz D.C."/>
            <person name="Perna N.T."/>
            <person name="Mobley H.L.T."/>
            <person name="Donnenberg M.S."/>
            <person name="Blattner F.R."/>
        </authorList>
    </citation>
    <scope>NUCLEOTIDE SEQUENCE [LARGE SCALE GENOMIC DNA]</scope>
    <source>
        <strain>CFT073 / ATCC 700928 / UPEC</strain>
    </source>
</reference>
<gene>
    <name type="primary">rpmG</name>
    <name type="ordered locus">c4460</name>
</gene>